<reference key="1">
    <citation type="journal article" date="2008" name="J. Bacteriol.">
        <title>Genome sequence of a nephritogenic and highly transformable M49 strain of Streptococcus pyogenes.</title>
        <authorList>
            <person name="McShan W.M."/>
            <person name="Ferretti J.J."/>
            <person name="Karasawa T."/>
            <person name="Suvorov A.N."/>
            <person name="Lin S."/>
            <person name="Qin B."/>
            <person name="Jia H."/>
            <person name="Kenton S."/>
            <person name="Najar F."/>
            <person name="Wu H."/>
            <person name="Scott J."/>
            <person name="Roe B.A."/>
            <person name="Savic D.J."/>
        </authorList>
    </citation>
    <scope>NUCLEOTIDE SEQUENCE [LARGE SCALE GENOMIC DNA]</scope>
    <source>
        <strain>NZ131</strain>
    </source>
</reference>
<proteinExistence type="inferred from homology"/>
<dbReference type="EC" id="3.1.-.-" evidence="1"/>
<dbReference type="EMBL" id="CP000829">
    <property type="protein sequence ID" value="ACI62000.1"/>
    <property type="molecule type" value="Genomic_DNA"/>
</dbReference>
<dbReference type="SMR" id="B5XJ01"/>
<dbReference type="KEGG" id="soz:Spy49_1750c"/>
<dbReference type="HOGENOM" id="CLU_098240_2_0_9"/>
<dbReference type="Proteomes" id="UP000001039">
    <property type="component" value="Chromosome"/>
</dbReference>
<dbReference type="GO" id="GO:0005829">
    <property type="term" value="C:cytosol"/>
    <property type="evidence" value="ECO:0007669"/>
    <property type="project" value="TreeGrafter"/>
</dbReference>
<dbReference type="GO" id="GO:0004518">
    <property type="term" value="F:nuclease activity"/>
    <property type="evidence" value="ECO:0007669"/>
    <property type="project" value="UniProtKB-KW"/>
</dbReference>
<dbReference type="GO" id="GO:0000967">
    <property type="term" value="P:rRNA 5'-end processing"/>
    <property type="evidence" value="ECO:0007669"/>
    <property type="project" value="UniProtKB-UniRule"/>
</dbReference>
<dbReference type="CDD" id="cd16964">
    <property type="entry name" value="YqgF"/>
    <property type="match status" value="1"/>
</dbReference>
<dbReference type="FunFam" id="3.30.420.140:FF:000003">
    <property type="entry name" value="Putative pre-16S rRNA nuclease"/>
    <property type="match status" value="1"/>
</dbReference>
<dbReference type="Gene3D" id="3.30.420.140">
    <property type="entry name" value="YqgF/RNase H-like domain"/>
    <property type="match status" value="1"/>
</dbReference>
<dbReference type="HAMAP" id="MF_00651">
    <property type="entry name" value="Nuclease_YqgF"/>
    <property type="match status" value="1"/>
</dbReference>
<dbReference type="InterPro" id="IPR012337">
    <property type="entry name" value="RNaseH-like_sf"/>
</dbReference>
<dbReference type="InterPro" id="IPR005227">
    <property type="entry name" value="YqgF"/>
</dbReference>
<dbReference type="InterPro" id="IPR006641">
    <property type="entry name" value="YqgF/RNaseH-like_dom"/>
</dbReference>
<dbReference type="InterPro" id="IPR037027">
    <property type="entry name" value="YqgF/RNaseH-like_dom_sf"/>
</dbReference>
<dbReference type="NCBIfam" id="TIGR00250">
    <property type="entry name" value="RNAse_H_YqgF"/>
    <property type="match status" value="1"/>
</dbReference>
<dbReference type="PANTHER" id="PTHR33317">
    <property type="entry name" value="POLYNUCLEOTIDYL TRANSFERASE, RIBONUCLEASE H-LIKE SUPERFAMILY PROTEIN"/>
    <property type="match status" value="1"/>
</dbReference>
<dbReference type="PANTHER" id="PTHR33317:SF4">
    <property type="entry name" value="POLYNUCLEOTIDYL TRANSFERASE, RIBONUCLEASE H-LIKE SUPERFAMILY PROTEIN"/>
    <property type="match status" value="1"/>
</dbReference>
<dbReference type="Pfam" id="PF03652">
    <property type="entry name" value="RuvX"/>
    <property type="match status" value="1"/>
</dbReference>
<dbReference type="SMART" id="SM00732">
    <property type="entry name" value="YqgFc"/>
    <property type="match status" value="1"/>
</dbReference>
<dbReference type="SUPFAM" id="SSF53098">
    <property type="entry name" value="Ribonuclease H-like"/>
    <property type="match status" value="1"/>
</dbReference>
<feature type="chain" id="PRO_1000131078" description="Putative pre-16S rRNA nuclease">
    <location>
        <begin position="1"/>
        <end position="139"/>
    </location>
</feature>
<keyword id="KW-0963">Cytoplasm</keyword>
<keyword id="KW-0378">Hydrolase</keyword>
<keyword id="KW-0540">Nuclease</keyword>
<keyword id="KW-0690">Ribosome biogenesis</keyword>
<name>YQGF_STRPZ</name>
<gene>
    <name type="ordered locus">Spy49_1750c</name>
</gene>
<sequence>MRIMGLDVGSKTVGVAISDPLGFTAQGLEIIKIDEEKAEFGFTRLEELVKQYQVEQFVIGLPKNMNNTNGPRVDASITYGSHIEHLFGLPVHYQDERLTTVEAERMLIEQADISRGKRKKVIDKLAAQLILQNYLNRNF</sequence>
<comment type="function">
    <text evidence="1">Could be a nuclease involved in processing of the 5'-end of pre-16S rRNA.</text>
</comment>
<comment type="subcellular location">
    <subcellularLocation>
        <location evidence="1">Cytoplasm</location>
    </subcellularLocation>
</comment>
<comment type="similarity">
    <text evidence="1">Belongs to the YqgF nuclease family.</text>
</comment>
<protein>
    <recommendedName>
        <fullName evidence="1">Putative pre-16S rRNA nuclease</fullName>
        <ecNumber evidence="1">3.1.-.-</ecNumber>
    </recommendedName>
</protein>
<evidence type="ECO:0000255" key="1">
    <source>
        <dbReference type="HAMAP-Rule" id="MF_00651"/>
    </source>
</evidence>
<organism>
    <name type="scientific">Streptococcus pyogenes serotype M49 (strain NZ131)</name>
    <dbReference type="NCBI Taxonomy" id="471876"/>
    <lineage>
        <taxon>Bacteria</taxon>
        <taxon>Bacillati</taxon>
        <taxon>Bacillota</taxon>
        <taxon>Bacilli</taxon>
        <taxon>Lactobacillales</taxon>
        <taxon>Streptococcaceae</taxon>
        <taxon>Streptococcus</taxon>
    </lineage>
</organism>
<accession>B5XJ01</accession>